<name>SYT_THET8</name>
<protein>
    <recommendedName>
        <fullName evidence="1">Threonine--tRNA ligase</fullName>
        <ecNumber evidence="1">6.1.1.3</ecNumber>
    </recommendedName>
    <alternativeName>
        <fullName evidence="1">Threonyl-tRNA synthetase</fullName>
        <shortName evidence="1">ThrRS</shortName>
    </alternativeName>
</protein>
<dbReference type="EC" id="6.1.1.3" evidence="1"/>
<dbReference type="EMBL" id="AJ250953">
    <property type="protein sequence ID" value="CAB65483.1"/>
    <property type="molecule type" value="Genomic_DNA"/>
</dbReference>
<dbReference type="EMBL" id="AP008226">
    <property type="protein sequence ID" value="BAD71698.1"/>
    <property type="molecule type" value="Genomic_DNA"/>
</dbReference>
<dbReference type="RefSeq" id="WP_011228977.1">
    <property type="nucleotide sequence ID" value="NC_006461.1"/>
</dbReference>
<dbReference type="RefSeq" id="YP_145141.1">
    <property type="nucleotide sequence ID" value="NC_006461.1"/>
</dbReference>
<dbReference type="SMR" id="P56881"/>
<dbReference type="EnsemblBacteria" id="BAD71698">
    <property type="protein sequence ID" value="BAD71698"/>
    <property type="gene ID" value="BAD71698"/>
</dbReference>
<dbReference type="GeneID" id="3168147"/>
<dbReference type="KEGG" id="ttj:TTHA1875"/>
<dbReference type="PATRIC" id="fig|300852.9.peg.1842"/>
<dbReference type="eggNOG" id="COG0441">
    <property type="taxonomic scope" value="Bacteria"/>
</dbReference>
<dbReference type="HOGENOM" id="CLU_008554_0_1_0"/>
<dbReference type="PhylomeDB" id="P56881"/>
<dbReference type="Proteomes" id="UP000000532">
    <property type="component" value="Chromosome"/>
</dbReference>
<dbReference type="GO" id="GO:0005737">
    <property type="term" value="C:cytoplasm"/>
    <property type="evidence" value="ECO:0007669"/>
    <property type="project" value="UniProtKB-SubCell"/>
</dbReference>
<dbReference type="GO" id="GO:0005524">
    <property type="term" value="F:ATP binding"/>
    <property type="evidence" value="ECO:0007669"/>
    <property type="project" value="UniProtKB-UniRule"/>
</dbReference>
<dbReference type="GO" id="GO:0046872">
    <property type="term" value="F:metal ion binding"/>
    <property type="evidence" value="ECO:0007669"/>
    <property type="project" value="UniProtKB-KW"/>
</dbReference>
<dbReference type="GO" id="GO:0004829">
    <property type="term" value="F:threonine-tRNA ligase activity"/>
    <property type="evidence" value="ECO:0007669"/>
    <property type="project" value="UniProtKB-UniRule"/>
</dbReference>
<dbReference type="GO" id="GO:0000049">
    <property type="term" value="F:tRNA binding"/>
    <property type="evidence" value="ECO:0007669"/>
    <property type="project" value="UniProtKB-KW"/>
</dbReference>
<dbReference type="GO" id="GO:0006435">
    <property type="term" value="P:threonyl-tRNA aminoacylation"/>
    <property type="evidence" value="ECO:0007669"/>
    <property type="project" value="UniProtKB-UniRule"/>
</dbReference>
<dbReference type="CDD" id="cd01667">
    <property type="entry name" value="TGS_ThrRS"/>
    <property type="match status" value="1"/>
</dbReference>
<dbReference type="CDD" id="cd00860">
    <property type="entry name" value="ThrRS_anticodon"/>
    <property type="match status" value="1"/>
</dbReference>
<dbReference type="CDD" id="cd00771">
    <property type="entry name" value="ThrRS_core"/>
    <property type="match status" value="1"/>
</dbReference>
<dbReference type="FunFam" id="3.30.930.10:FF:000002">
    <property type="entry name" value="Threonine--tRNA ligase"/>
    <property type="match status" value="1"/>
</dbReference>
<dbReference type="FunFam" id="3.40.50.800:FF:000001">
    <property type="entry name" value="Threonine--tRNA ligase"/>
    <property type="match status" value="1"/>
</dbReference>
<dbReference type="FunFam" id="3.30.980.10:FF:000005">
    <property type="entry name" value="Threonyl-tRNA synthetase, mitochondrial"/>
    <property type="match status" value="1"/>
</dbReference>
<dbReference type="Gene3D" id="3.10.20.30">
    <property type="match status" value="1"/>
</dbReference>
<dbReference type="Gene3D" id="3.30.54.20">
    <property type="match status" value="1"/>
</dbReference>
<dbReference type="Gene3D" id="3.40.50.800">
    <property type="entry name" value="Anticodon-binding domain"/>
    <property type="match status" value="1"/>
</dbReference>
<dbReference type="Gene3D" id="3.30.930.10">
    <property type="entry name" value="Bira Bifunctional Protein, Domain 2"/>
    <property type="match status" value="1"/>
</dbReference>
<dbReference type="Gene3D" id="3.30.980.10">
    <property type="entry name" value="Threonyl-trna Synthetase, Chain A, domain 2"/>
    <property type="match status" value="1"/>
</dbReference>
<dbReference type="HAMAP" id="MF_00184">
    <property type="entry name" value="Thr_tRNA_synth"/>
    <property type="match status" value="1"/>
</dbReference>
<dbReference type="InterPro" id="IPR002314">
    <property type="entry name" value="aa-tRNA-synt_IIb"/>
</dbReference>
<dbReference type="InterPro" id="IPR006195">
    <property type="entry name" value="aa-tRNA-synth_II"/>
</dbReference>
<dbReference type="InterPro" id="IPR045864">
    <property type="entry name" value="aa-tRNA-synth_II/BPL/LPL"/>
</dbReference>
<dbReference type="InterPro" id="IPR004154">
    <property type="entry name" value="Anticodon-bd"/>
</dbReference>
<dbReference type="InterPro" id="IPR036621">
    <property type="entry name" value="Anticodon-bd_dom_sf"/>
</dbReference>
<dbReference type="InterPro" id="IPR012675">
    <property type="entry name" value="Beta-grasp_dom_sf"/>
</dbReference>
<dbReference type="InterPro" id="IPR004095">
    <property type="entry name" value="TGS"/>
</dbReference>
<dbReference type="InterPro" id="IPR012676">
    <property type="entry name" value="TGS-like"/>
</dbReference>
<dbReference type="InterPro" id="IPR002320">
    <property type="entry name" value="Thr-tRNA-ligase_IIa"/>
</dbReference>
<dbReference type="InterPro" id="IPR018163">
    <property type="entry name" value="Thr/Ala-tRNA-synth_IIc_edit"/>
</dbReference>
<dbReference type="InterPro" id="IPR047246">
    <property type="entry name" value="ThrRS_anticodon"/>
</dbReference>
<dbReference type="InterPro" id="IPR033728">
    <property type="entry name" value="ThrRS_core"/>
</dbReference>
<dbReference type="InterPro" id="IPR012947">
    <property type="entry name" value="tRNA_SAD"/>
</dbReference>
<dbReference type="NCBIfam" id="TIGR00418">
    <property type="entry name" value="thrS"/>
    <property type="match status" value="1"/>
</dbReference>
<dbReference type="PANTHER" id="PTHR11451:SF44">
    <property type="entry name" value="THREONINE--TRNA LIGASE, CHLOROPLASTIC_MITOCHONDRIAL 2"/>
    <property type="match status" value="1"/>
</dbReference>
<dbReference type="PANTHER" id="PTHR11451">
    <property type="entry name" value="THREONINE-TRNA LIGASE"/>
    <property type="match status" value="1"/>
</dbReference>
<dbReference type="Pfam" id="PF03129">
    <property type="entry name" value="HGTP_anticodon"/>
    <property type="match status" value="1"/>
</dbReference>
<dbReference type="Pfam" id="PF02824">
    <property type="entry name" value="TGS"/>
    <property type="match status" value="1"/>
</dbReference>
<dbReference type="Pfam" id="PF00587">
    <property type="entry name" value="tRNA-synt_2b"/>
    <property type="match status" value="1"/>
</dbReference>
<dbReference type="Pfam" id="PF07973">
    <property type="entry name" value="tRNA_SAD"/>
    <property type="match status" value="1"/>
</dbReference>
<dbReference type="PRINTS" id="PR01047">
    <property type="entry name" value="TRNASYNTHTHR"/>
</dbReference>
<dbReference type="SMART" id="SM00863">
    <property type="entry name" value="tRNA_SAD"/>
    <property type="match status" value="1"/>
</dbReference>
<dbReference type="SUPFAM" id="SSF52954">
    <property type="entry name" value="Class II aaRS ABD-related"/>
    <property type="match status" value="1"/>
</dbReference>
<dbReference type="SUPFAM" id="SSF55681">
    <property type="entry name" value="Class II aaRS and biotin synthetases"/>
    <property type="match status" value="1"/>
</dbReference>
<dbReference type="SUPFAM" id="SSF81271">
    <property type="entry name" value="TGS-like"/>
    <property type="match status" value="1"/>
</dbReference>
<dbReference type="SUPFAM" id="SSF55186">
    <property type="entry name" value="ThrRS/AlaRS common domain"/>
    <property type="match status" value="1"/>
</dbReference>
<dbReference type="PROSITE" id="PS50862">
    <property type="entry name" value="AA_TRNA_LIGASE_II"/>
    <property type="match status" value="1"/>
</dbReference>
<dbReference type="PROSITE" id="PS51880">
    <property type="entry name" value="TGS"/>
    <property type="match status" value="1"/>
</dbReference>
<gene>
    <name evidence="1" type="primary">thrS</name>
    <name type="ordered locus">TTHA1875</name>
</gene>
<accession>P56881</accession>
<accession>Q5SH55</accession>
<comment type="function">
    <text evidence="1">Catalyzes the attachment of threonine to tRNA(Thr) in a two-step reaction: L-threonine is first activated by ATP to form Thr-AMP and then transferred to the acceptor end of tRNA(Thr). Also edits incorrectly charged L-seryl-tRNA(Thr).</text>
</comment>
<comment type="catalytic activity">
    <reaction evidence="1">
        <text>tRNA(Thr) + L-threonine + ATP = L-threonyl-tRNA(Thr) + AMP + diphosphate + H(+)</text>
        <dbReference type="Rhea" id="RHEA:24624"/>
        <dbReference type="Rhea" id="RHEA-COMP:9670"/>
        <dbReference type="Rhea" id="RHEA-COMP:9704"/>
        <dbReference type="ChEBI" id="CHEBI:15378"/>
        <dbReference type="ChEBI" id="CHEBI:30616"/>
        <dbReference type="ChEBI" id="CHEBI:33019"/>
        <dbReference type="ChEBI" id="CHEBI:57926"/>
        <dbReference type="ChEBI" id="CHEBI:78442"/>
        <dbReference type="ChEBI" id="CHEBI:78534"/>
        <dbReference type="ChEBI" id="CHEBI:456215"/>
        <dbReference type="EC" id="6.1.1.3"/>
    </reaction>
</comment>
<comment type="cofactor">
    <cofactor evidence="1">
        <name>Zn(2+)</name>
        <dbReference type="ChEBI" id="CHEBI:29105"/>
    </cofactor>
    <text evidence="1">Binds 1 zinc ion per subunit.</text>
</comment>
<comment type="subunit">
    <text evidence="1">Homodimer.</text>
</comment>
<comment type="subcellular location">
    <subcellularLocation>
        <location evidence="1">Cytoplasm</location>
    </subcellularLocation>
</comment>
<comment type="domain">
    <text>The C-terminal domain recognizes the anticodon bases.</text>
</comment>
<comment type="similarity">
    <text evidence="1">Belongs to the class-II aminoacyl-tRNA synthetase family.</text>
</comment>
<reference key="1">
    <citation type="journal article" date="2000" name="Eur. J. Biochem.">
        <title>Sequence analysis and modular organization of threonyl-tRNA synthetase from Thermus thermophilus and its interrelation with threonyl-tRNA synthetases of other origins.</title>
        <authorList>
            <person name="Cura V."/>
            <person name="Moras D."/>
            <person name="Kern D."/>
        </authorList>
    </citation>
    <scope>NUCLEOTIDE SEQUENCE [GENOMIC DNA]</scope>
</reference>
<reference key="2">
    <citation type="submission" date="2004-11" db="EMBL/GenBank/DDBJ databases">
        <title>Complete genome sequence of Thermus thermophilus HB8.</title>
        <authorList>
            <person name="Masui R."/>
            <person name="Kurokawa K."/>
            <person name="Nakagawa N."/>
            <person name="Tokunaga F."/>
            <person name="Koyama Y."/>
            <person name="Shibata T."/>
            <person name="Oshima T."/>
            <person name="Yokoyama S."/>
            <person name="Yasunaga T."/>
            <person name="Kuramitsu S."/>
        </authorList>
    </citation>
    <scope>NUCLEOTIDE SEQUENCE [LARGE SCALE GENOMIC DNA]</scope>
    <source>
        <strain>ATCC 27634 / DSM 579 / HB8</strain>
    </source>
</reference>
<reference key="3">
    <citation type="journal article" date="1994" name="Biochimie">
        <title>Threonyl-tRNA synthetase from Thermus thermophilus: purification and some structural and kinetic properties.</title>
        <authorList>
            <person name="Zheltonosova J."/>
            <person name="Melnikova E."/>
            <person name="Garber M."/>
            <person name="Reinbolt J."/>
            <person name="Kern D."/>
            <person name="Ehresmann C."/>
            <person name="Ehresmann B."/>
        </authorList>
    </citation>
    <scope>PROTEIN SEQUENCE OF 1-45</scope>
    <scope>CHARACTERIZATION</scope>
</reference>
<sequence>MTVYLPDGKPLELPEGATAKDVARALGEGWERRAVGAIVDGELYDLLKPLPQGAKVRLLTEKDPEFQTLFRHTLAHVLAQAVKEFFREKGYDPESVRLGVGPVIEKGFYYDIEAPEPLSDEDLPAIEAKMREILKRDLPLRRFVLSREEALARYRGKDPYKTELVLEIPEGEEISFYQQGDEAYGFTDLCRGPHVPSTGRIPPHFKLTHVAGAYWRGDENRPMLQRVYGVAFRTAEELKEYLWQLEEAKKRDHRRLGRELELFLIDPLVGKGLVLWLPKGNVVREELMAFMREEQVRRGYQLVTTPHIGSLELYKTSGHYPYYAESQFPPISFKERGEEEEYLLKPMNCPHHIRIYAYRKRSYRELPLRLAEFGTVYRYEKAGELLGLTRVRGFTQDDAHIFCTPEEVKGEFLGVLDLVLKVFATLGLKDYRARIGVRDPKSDKYVGDEAKWALAERQIEEAAAEAGLRYTVEEGDAAFYGPKLDFVVKDALGREWQLGTIQVDYNLPERFGLTYVGKDGEEHRPVMLHRAPFGSLERFIGILIEHFAGDFPLWLAPVQAVVVPVSEKQEDYAREVAGRLKEAGLRAEADTRPERMQARIRDAEVQKVPYILVVGEREKAEGAVSVRRRKKGNLGTMPLAAFLEGALREYRERRLEPVF</sequence>
<organism>
    <name type="scientific">Thermus thermophilus (strain ATCC 27634 / DSM 579 / HB8)</name>
    <dbReference type="NCBI Taxonomy" id="300852"/>
    <lineage>
        <taxon>Bacteria</taxon>
        <taxon>Thermotogati</taxon>
        <taxon>Deinococcota</taxon>
        <taxon>Deinococci</taxon>
        <taxon>Thermales</taxon>
        <taxon>Thermaceae</taxon>
        <taxon>Thermus</taxon>
    </lineage>
</organism>
<feature type="chain" id="PRO_0000101075" description="Threonine--tRNA ligase">
    <location>
        <begin position="1"/>
        <end position="659"/>
    </location>
</feature>
<feature type="domain" description="TGS" evidence="2">
    <location>
        <begin position="1"/>
        <end position="60"/>
    </location>
</feature>
<feature type="region of interest" description="Catalytic">
    <location>
        <begin position="234"/>
        <end position="548"/>
    </location>
</feature>
<feature type="region of interest" description="Catalytic" evidence="1">
    <location>
        <begin position="252"/>
        <end position="552"/>
    </location>
</feature>
<feature type="binding site" evidence="1">
    <location>
        <position position="349"/>
    </location>
    <ligand>
        <name>Zn(2+)</name>
        <dbReference type="ChEBI" id="CHEBI:29105"/>
    </ligand>
</feature>
<feature type="binding site" evidence="1">
    <location>
        <position position="400"/>
    </location>
    <ligand>
        <name>Zn(2+)</name>
        <dbReference type="ChEBI" id="CHEBI:29105"/>
    </ligand>
</feature>
<feature type="binding site" evidence="1">
    <location>
        <position position="529"/>
    </location>
    <ligand>
        <name>Zn(2+)</name>
        <dbReference type="ChEBI" id="CHEBI:29105"/>
    </ligand>
</feature>
<feature type="sequence conflict" description="In Ref. 3; AA sequence." evidence="3" ref="3">
    <original>E</original>
    <variation>T</variation>
    <location>
        <position position="42"/>
    </location>
</feature>
<keyword id="KW-0030">Aminoacyl-tRNA synthetase</keyword>
<keyword id="KW-0067">ATP-binding</keyword>
<keyword id="KW-0963">Cytoplasm</keyword>
<keyword id="KW-0903">Direct protein sequencing</keyword>
<keyword id="KW-0436">Ligase</keyword>
<keyword id="KW-0479">Metal-binding</keyword>
<keyword id="KW-0547">Nucleotide-binding</keyword>
<keyword id="KW-0648">Protein biosynthesis</keyword>
<keyword id="KW-1185">Reference proteome</keyword>
<keyword id="KW-0694">RNA-binding</keyword>
<keyword id="KW-0820">tRNA-binding</keyword>
<keyword id="KW-0862">Zinc</keyword>
<evidence type="ECO:0000255" key="1">
    <source>
        <dbReference type="HAMAP-Rule" id="MF_00184"/>
    </source>
</evidence>
<evidence type="ECO:0000255" key="2">
    <source>
        <dbReference type="PROSITE-ProRule" id="PRU01228"/>
    </source>
</evidence>
<evidence type="ECO:0000305" key="3"/>
<proteinExistence type="evidence at protein level"/>